<feature type="signal peptide" evidence="3">
    <location>
        <begin position="1"/>
        <end position="30"/>
    </location>
</feature>
<feature type="chain" id="PRO_0000406954" description="NELL2-interacting cell ontogeny regulator 1">
    <location>
        <begin position="31"/>
        <end position="92"/>
    </location>
</feature>
<sequence>MALPSAWSVMRVVIPFISVLGLLGVRLVGASQDSGSVIPAESRPCVDCHAFEFMQRALQDLKKMAYNLDTRTETLLLRAEKRGLCDCFPAMH</sequence>
<keyword id="KW-0963">Cytoplasm</keyword>
<keyword id="KW-1185">Reference proteome</keyword>
<keyword id="KW-0694">RNA-binding</keyword>
<keyword id="KW-0964">Secreted</keyword>
<keyword id="KW-0732">Signal</keyword>
<comment type="function">
    <text evidence="1">mRNA-binding protein which interacts with a range of target mRNAs and may promote extracellular matrix production. May function as a component of lumicrine signaling and may play a crucial role in epididymal-mediated sperm maturation and male fertility.</text>
</comment>
<comment type="subcellular location">
    <subcellularLocation>
        <location evidence="1">Secreted</location>
    </subcellularLocation>
    <subcellularLocation>
        <location evidence="1">Cytoplasm</location>
        <location evidence="1">Perinuclear region</location>
    </subcellularLocation>
    <text evidence="1">Detected in the perinuclear region of fibroblasts.</text>
</comment>
<comment type="similarity">
    <text evidence="4">Belongs to the NICOL family.</text>
</comment>
<dbReference type="EMBL" id="AADN02014948">
    <property type="status" value="NOT_ANNOTATED_CDS"/>
    <property type="molecule type" value="Genomic_DNA"/>
</dbReference>
<dbReference type="EMBL" id="AADN02014949">
    <property type="status" value="NOT_ANNOTATED_CDS"/>
    <property type="molecule type" value="Genomic_DNA"/>
</dbReference>
<dbReference type="EMBL" id="AADN02014950">
    <property type="status" value="NOT_ANNOTATED_CDS"/>
    <property type="molecule type" value="Genomic_DNA"/>
</dbReference>
<dbReference type="FunCoup" id="E1BRC3">
    <property type="interactions" value="56"/>
</dbReference>
<dbReference type="PaxDb" id="9031-ENSGALP00000040604"/>
<dbReference type="VEuPathDB" id="HostDB:geneid_422894"/>
<dbReference type="eggNOG" id="ENOG502S5WR">
    <property type="taxonomic scope" value="Eukaryota"/>
</dbReference>
<dbReference type="HOGENOM" id="CLU_153985_1_0_1"/>
<dbReference type="InParanoid" id="E1BRC3"/>
<dbReference type="PhylomeDB" id="E1BRC3"/>
<dbReference type="TreeFam" id="TF336171"/>
<dbReference type="PRO" id="PR:E1BRC3"/>
<dbReference type="Proteomes" id="UP000000539">
    <property type="component" value="Unassembled WGS sequence"/>
</dbReference>
<dbReference type="GO" id="GO:0005615">
    <property type="term" value="C:extracellular space"/>
    <property type="evidence" value="ECO:0000250"/>
    <property type="project" value="UniProtKB"/>
</dbReference>
<dbReference type="GO" id="GO:0048471">
    <property type="term" value="C:perinuclear region of cytoplasm"/>
    <property type="evidence" value="ECO:0007669"/>
    <property type="project" value="UniProtKB-SubCell"/>
</dbReference>
<dbReference type="GO" id="GO:0003730">
    <property type="term" value="F:mRNA 3'-UTR binding"/>
    <property type="evidence" value="ECO:0000250"/>
    <property type="project" value="UniProtKB"/>
</dbReference>
<dbReference type="GO" id="GO:0007283">
    <property type="term" value="P:spermatogenesis"/>
    <property type="evidence" value="ECO:0000318"/>
    <property type="project" value="GO_Central"/>
</dbReference>
<dbReference type="InterPro" id="IPR028147">
    <property type="entry name" value="NICOL"/>
</dbReference>
<dbReference type="PANTHER" id="PTHR35451">
    <property type="entry name" value="NEUROPEPTIDE-LIKE PROTEIN C4ORF48"/>
    <property type="match status" value="1"/>
</dbReference>
<dbReference type="PANTHER" id="PTHR35451:SF1">
    <property type="entry name" value="NEUROPEPTIDE-LIKE PROTEIN C4ORF48"/>
    <property type="match status" value="1"/>
</dbReference>
<dbReference type="Pfam" id="PF15161">
    <property type="entry name" value="Neuropep_like"/>
    <property type="match status" value="1"/>
</dbReference>
<accession>E1BRC3</accession>
<gene>
    <name evidence="2" type="primary">NICOL1</name>
</gene>
<organism>
    <name type="scientific">Gallus gallus</name>
    <name type="common">Chicken</name>
    <dbReference type="NCBI Taxonomy" id="9031"/>
    <lineage>
        <taxon>Eukaryota</taxon>
        <taxon>Metazoa</taxon>
        <taxon>Chordata</taxon>
        <taxon>Craniata</taxon>
        <taxon>Vertebrata</taxon>
        <taxon>Euteleostomi</taxon>
        <taxon>Archelosauria</taxon>
        <taxon>Archosauria</taxon>
        <taxon>Dinosauria</taxon>
        <taxon>Saurischia</taxon>
        <taxon>Theropoda</taxon>
        <taxon>Coelurosauria</taxon>
        <taxon>Aves</taxon>
        <taxon>Neognathae</taxon>
        <taxon>Galloanserae</taxon>
        <taxon>Galliformes</taxon>
        <taxon>Phasianidae</taxon>
        <taxon>Phasianinae</taxon>
        <taxon>Gallus</taxon>
    </lineage>
</organism>
<reference key="1">
    <citation type="journal article" date="2004" name="Nature">
        <title>Sequence and comparative analysis of the chicken genome provide unique perspectives on vertebrate evolution.</title>
        <authorList>
            <person name="Hillier L.W."/>
            <person name="Miller W."/>
            <person name="Birney E."/>
            <person name="Warren W."/>
            <person name="Hardison R.C."/>
            <person name="Ponting C.P."/>
            <person name="Bork P."/>
            <person name="Burt D.W."/>
            <person name="Groenen M.A.M."/>
            <person name="Delany M.E."/>
            <person name="Dodgson J.B."/>
            <person name="Chinwalla A.T."/>
            <person name="Cliften P.F."/>
            <person name="Clifton S.W."/>
            <person name="Delehaunty K.D."/>
            <person name="Fronick C."/>
            <person name="Fulton R.S."/>
            <person name="Graves T.A."/>
            <person name="Kremitzki C."/>
            <person name="Layman D."/>
            <person name="Magrini V."/>
            <person name="McPherson J.D."/>
            <person name="Miner T.L."/>
            <person name="Minx P."/>
            <person name="Nash W.E."/>
            <person name="Nhan M.N."/>
            <person name="Nelson J.O."/>
            <person name="Oddy L.G."/>
            <person name="Pohl C.S."/>
            <person name="Randall-Maher J."/>
            <person name="Smith S.M."/>
            <person name="Wallis J.W."/>
            <person name="Yang S.-P."/>
            <person name="Romanov M.N."/>
            <person name="Rondelli C.M."/>
            <person name="Paton B."/>
            <person name="Smith J."/>
            <person name="Morrice D."/>
            <person name="Daniels L."/>
            <person name="Tempest H.G."/>
            <person name="Robertson L."/>
            <person name="Masabanda J.S."/>
            <person name="Griffin D.K."/>
            <person name="Vignal A."/>
            <person name="Fillon V."/>
            <person name="Jacobbson L."/>
            <person name="Kerje S."/>
            <person name="Andersson L."/>
            <person name="Crooijmans R.P."/>
            <person name="Aerts J."/>
            <person name="van der Poel J.J."/>
            <person name="Ellegren H."/>
            <person name="Caldwell R.B."/>
            <person name="Hubbard S.J."/>
            <person name="Grafham D.V."/>
            <person name="Kierzek A.M."/>
            <person name="McLaren S.R."/>
            <person name="Overton I.M."/>
            <person name="Arakawa H."/>
            <person name="Beattie K.J."/>
            <person name="Bezzubov Y."/>
            <person name="Boardman P.E."/>
            <person name="Bonfield J.K."/>
            <person name="Croning M.D.R."/>
            <person name="Davies R.M."/>
            <person name="Francis M.D."/>
            <person name="Humphray S.J."/>
            <person name="Scott C.E."/>
            <person name="Taylor R.G."/>
            <person name="Tickle C."/>
            <person name="Brown W.R.A."/>
            <person name="Rogers J."/>
            <person name="Buerstedde J.-M."/>
            <person name="Wilson S.A."/>
            <person name="Stubbs L."/>
            <person name="Ovcharenko I."/>
            <person name="Gordon L."/>
            <person name="Lucas S."/>
            <person name="Miller M.M."/>
            <person name="Inoko H."/>
            <person name="Shiina T."/>
            <person name="Kaufman J."/>
            <person name="Salomonsen J."/>
            <person name="Skjoedt K."/>
            <person name="Wong G.K.-S."/>
            <person name="Wang J."/>
            <person name="Liu B."/>
            <person name="Wang J."/>
            <person name="Yu J."/>
            <person name="Yang H."/>
            <person name="Nefedov M."/>
            <person name="Koriabine M."/>
            <person name="Dejong P.J."/>
            <person name="Goodstadt L."/>
            <person name="Webber C."/>
            <person name="Dickens N.J."/>
            <person name="Letunic I."/>
            <person name="Suyama M."/>
            <person name="Torrents D."/>
            <person name="von Mering C."/>
            <person name="Zdobnov E.M."/>
            <person name="Makova K."/>
            <person name="Nekrutenko A."/>
            <person name="Elnitski L."/>
            <person name="Eswara P."/>
            <person name="King D.C."/>
            <person name="Yang S.-P."/>
            <person name="Tyekucheva S."/>
            <person name="Radakrishnan A."/>
            <person name="Harris R.S."/>
            <person name="Chiaromonte F."/>
            <person name="Taylor J."/>
            <person name="He J."/>
            <person name="Rijnkels M."/>
            <person name="Griffiths-Jones S."/>
            <person name="Ureta-Vidal A."/>
            <person name="Hoffman M.M."/>
            <person name="Severin J."/>
            <person name="Searle S.M.J."/>
            <person name="Law A.S."/>
            <person name="Speed D."/>
            <person name="Waddington D."/>
            <person name="Cheng Z."/>
            <person name="Tuzun E."/>
            <person name="Eichler E."/>
            <person name="Bao Z."/>
            <person name="Flicek P."/>
            <person name="Shteynberg D.D."/>
            <person name="Brent M.R."/>
            <person name="Bye J.M."/>
            <person name="Huckle E.J."/>
            <person name="Chatterji S."/>
            <person name="Dewey C."/>
            <person name="Pachter L."/>
            <person name="Kouranov A."/>
            <person name="Mourelatos Z."/>
            <person name="Hatzigeorgiou A.G."/>
            <person name="Paterson A.H."/>
            <person name="Ivarie R."/>
            <person name="Brandstrom M."/>
            <person name="Axelsson E."/>
            <person name="Backstrom N."/>
            <person name="Berlin S."/>
            <person name="Webster M.T."/>
            <person name="Pourquie O."/>
            <person name="Reymond A."/>
            <person name="Ucla C."/>
            <person name="Antonarakis S.E."/>
            <person name="Long M."/>
            <person name="Emerson J.J."/>
            <person name="Betran E."/>
            <person name="Dupanloup I."/>
            <person name="Kaessmann H."/>
            <person name="Hinrichs A.S."/>
            <person name="Bejerano G."/>
            <person name="Furey T.S."/>
            <person name="Harte R.A."/>
            <person name="Raney B."/>
            <person name="Siepel A."/>
            <person name="Kent W.J."/>
            <person name="Haussler D."/>
            <person name="Eyras E."/>
            <person name="Castelo R."/>
            <person name="Abril J.F."/>
            <person name="Castellano S."/>
            <person name="Camara F."/>
            <person name="Parra G."/>
            <person name="Guigo R."/>
            <person name="Bourque G."/>
            <person name="Tesler G."/>
            <person name="Pevzner P.A."/>
            <person name="Smit A."/>
            <person name="Fulton L.A."/>
            <person name="Mardis E.R."/>
            <person name="Wilson R.K."/>
        </authorList>
    </citation>
    <scope>NUCLEOTIDE SEQUENCE [LARGE SCALE GENOMIC DNA]</scope>
    <source>
        <strain>Red jungle fowl</strain>
    </source>
</reference>
<evidence type="ECO:0000250" key="1">
    <source>
        <dbReference type="UniProtKB" id="Q3UR78"/>
    </source>
</evidence>
<evidence type="ECO:0000250" key="2">
    <source>
        <dbReference type="UniProtKB" id="Q5BLP8"/>
    </source>
</evidence>
<evidence type="ECO:0000255" key="3"/>
<evidence type="ECO:0000305" key="4"/>
<protein>
    <recommendedName>
        <fullName evidence="2">NELL2-interacting cell ontogeny regulator 1</fullName>
    </recommendedName>
    <alternativeName>
        <fullName evidence="1">NELL2-interacting cofactor for lumicrine signaling</fullName>
        <shortName evidence="1">NICOL</shortName>
    </alternativeName>
</protein>
<proteinExistence type="inferred from homology"/>
<name>NICOL_CHICK</name>